<accession>A7RHB3</accession>
<proteinExistence type="inferred from homology"/>
<dbReference type="EMBL" id="DS469510">
    <property type="protein sequence ID" value="EDO49318.1"/>
    <property type="status" value="ALT_INIT"/>
    <property type="molecule type" value="Genomic_DNA"/>
</dbReference>
<dbReference type="RefSeq" id="XP_001641381.1">
    <property type="nucleotide sequence ID" value="XM_001641331.1"/>
</dbReference>
<dbReference type="KEGG" id="nve:5521475"/>
<dbReference type="eggNOG" id="ENOG502SBQA">
    <property type="taxonomic scope" value="Eukaryota"/>
</dbReference>
<dbReference type="HOGENOM" id="CLU_193412_0_0_1"/>
<dbReference type="InParanoid" id="A7RHB3"/>
<dbReference type="OrthoDB" id="5945439at2759"/>
<dbReference type="PhylomeDB" id="A7RHB3"/>
<dbReference type="Proteomes" id="UP000001593">
    <property type="component" value="Unassembled WGS sequence"/>
</dbReference>
<keyword id="KW-1185">Reference proteome</keyword>
<name>SPT45_NEMVE</name>
<sequence length="91" mass="10803">MKEKQTTTISLTYRKVKVYFVNTMNIESWCTVELNSKQDWTRADRKHDPNGFNSSVFKGASNQHQESSLDFATAEPEFHRERRHFPEKSEY</sequence>
<reference key="1">
    <citation type="journal article" date="2007" name="Science">
        <title>Sea anemone genome reveals ancestral eumetazoan gene repertoire and genomic organization.</title>
        <authorList>
            <person name="Putnam N.H."/>
            <person name="Srivastava M."/>
            <person name="Hellsten U."/>
            <person name="Dirks B."/>
            <person name="Chapman J."/>
            <person name="Salamov A."/>
            <person name="Terry A."/>
            <person name="Shapiro H."/>
            <person name="Lindquist E."/>
            <person name="Kapitonov V.V."/>
            <person name="Jurka J."/>
            <person name="Genikhovich G."/>
            <person name="Grigoriev I.V."/>
            <person name="Lucas S.M."/>
            <person name="Steele R.E."/>
            <person name="Finnerty J.R."/>
            <person name="Technau U."/>
            <person name="Martindale M.Q."/>
            <person name="Rokhsar D.S."/>
        </authorList>
    </citation>
    <scope>NUCLEOTIDE SEQUENCE [LARGE SCALE GENOMIC DNA]</scope>
    <source>
        <strain>CH2 X CH6</strain>
    </source>
</reference>
<comment type="similarity">
    <text evidence="2">Belongs to the SPATA45 family.</text>
</comment>
<comment type="sequence caution" evidence="2">
    <conflict type="erroneous initiation">
        <sequence resource="EMBL-CDS" id="EDO49318"/>
    </conflict>
</comment>
<feature type="chain" id="PRO_0000365558" description="Protein SPATA45 homolog">
    <location>
        <begin position="1"/>
        <end position="91"/>
    </location>
</feature>
<feature type="region of interest" description="Disordered" evidence="1">
    <location>
        <begin position="42"/>
        <end position="91"/>
    </location>
</feature>
<feature type="compositionally biased region" description="Polar residues" evidence="1">
    <location>
        <begin position="51"/>
        <end position="70"/>
    </location>
</feature>
<feature type="compositionally biased region" description="Basic and acidic residues" evidence="1">
    <location>
        <begin position="76"/>
        <end position="91"/>
    </location>
</feature>
<organism>
    <name type="scientific">Nematostella vectensis</name>
    <name type="common">Starlet sea anemone</name>
    <dbReference type="NCBI Taxonomy" id="45351"/>
    <lineage>
        <taxon>Eukaryota</taxon>
        <taxon>Metazoa</taxon>
        <taxon>Cnidaria</taxon>
        <taxon>Anthozoa</taxon>
        <taxon>Hexacorallia</taxon>
        <taxon>Actiniaria</taxon>
        <taxon>Edwardsiidae</taxon>
        <taxon>Nematostella</taxon>
    </lineage>
</organism>
<protein>
    <recommendedName>
        <fullName>Protein SPATA45 homolog</fullName>
    </recommendedName>
</protein>
<evidence type="ECO:0000256" key="1">
    <source>
        <dbReference type="SAM" id="MobiDB-lite"/>
    </source>
</evidence>
<evidence type="ECO:0000305" key="2"/>
<gene>
    <name type="ORF">v1g81173</name>
</gene>